<protein>
    <recommendedName>
        <fullName evidence="1">Cytidylate kinase</fullName>
        <shortName evidence="1">CK</shortName>
        <ecNumber evidence="1">2.7.4.25</ecNumber>
    </recommendedName>
    <alternativeName>
        <fullName evidence="1">Cytidine monophosphate kinase</fullName>
        <shortName evidence="1">CMP kinase</shortName>
    </alternativeName>
</protein>
<keyword id="KW-0067">ATP-binding</keyword>
<keyword id="KW-0963">Cytoplasm</keyword>
<keyword id="KW-0418">Kinase</keyword>
<keyword id="KW-0547">Nucleotide-binding</keyword>
<keyword id="KW-0808">Transferase</keyword>
<feature type="chain" id="PRO_1000048317" description="Cytidylate kinase">
    <location>
        <begin position="1"/>
        <end position="230"/>
    </location>
</feature>
<feature type="binding site" evidence="1">
    <location>
        <begin position="12"/>
        <end position="20"/>
    </location>
    <ligand>
        <name>ATP</name>
        <dbReference type="ChEBI" id="CHEBI:30616"/>
    </ligand>
</feature>
<gene>
    <name evidence="1" type="primary">cmk</name>
    <name type="ordered locus">YPA_0682</name>
</gene>
<accession>Q1CA72</accession>
<evidence type="ECO:0000255" key="1">
    <source>
        <dbReference type="HAMAP-Rule" id="MF_00238"/>
    </source>
</evidence>
<proteinExistence type="inferred from homology"/>
<organism>
    <name type="scientific">Yersinia pestis bv. Antiqua (strain Antiqua)</name>
    <dbReference type="NCBI Taxonomy" id="360102"/>
    <lineage>
        <taxon>Bacteria</taxon>
        <taxon>Pseudomonadati</taxon>
        <taxon>Pseudomonadota</taxon>
        <taxon>Gammaproteobacteria</taxon>
        <taxon>Enterobacterales</taxon>
        <taxon>Yersiniaceae</taxon>
        <taxon>Yersinia</taxon>
    </lineage>
</organism>
<name>KCY_YERPA</name>
<reference key="1">
    <citation type="journal article" date="2006" name="J. Bacteriol.">
        <title>Complete genome sequence of Yersinia pestis strains Antiqua and Nepal516: evidence of gene reduction in an emerging pathogen.</title>
        <authorList>
            <person name="Chain P.S.G."/>
            <person name="Hu P."/>
            <person name="Malfatti S.A."/>
            <person name="Radnedge L."/>
            <person name="Larimer F."/>
            <person name="Vergez L.M."/>
            <person name="Worsham P."/>
            <person name="Chu M.C."/>
            <person name="Andersen G.L."/>
        </authorList>
    </citation>
    <scope>NUCLEOTIDE SEQUENCE [LARGE SCALE GENOMIC DNA]</scope>
    <source>
        <strain>Antiqua</strain>
    </source>
</reference>
<comment type="catalytic activity">
    <reaction evidence="1">
        <text>CMP + ATP = CDP + ADP</text>
        <dbReference type="Rhea" id="RHEA:11600"/>
        <dbReference type="ChEBI" id="CHEBI:30616"/>
        <dbReference type="ChEBI" id="CHEBI:58069"/>
        <dbReference type="ChEBI" id="CHEBI:60377"/>
        <dbReference type="ChEBI" id="CHEBI:456216"/>
        <dbReference type="EC" id="2.7.4.25"/>
    </reaction>
</comment>
<comment type="catalytic activity">
    <reaction evidence="1">
        <text>dCMP + ATP = dCDP + ADP</text>
        <dbReference type="Rhea" id="RHEA:25094"/>
        <dbReference type="ChEBI" id="CHEBI:30616"/>
        <dbReference type="ChEBI" id="CHEBI:57566"/>
        <dbReference type="ChEBI" id="CHEBI:58593"/>
        <dbReference type="ChEBI" id="CHEBI:456216"/>
        <dbReference type="EC" id="2.7.4.25"/>
    </reaction>
</comment>
<comment type="subcellular location">
    <subcellularLocation>
        <location evidence="1">Cytoplasm</location>
    </subcellularLocation>
</comment>
<comment type="similarity">
    <text evidence="1">Belongs to the cytidylate kinase family. Type 1 subfamily.</text>
</comment>
<sequence length="230" mass="25195">MTAIAPVITVDGPSGAGKGTLCKALAESLNWRLLDSGAIYRVLALAALHHQVDISTEEALVPLAAHLDVRFVSQNGQLQVILEGEDVSNEIRTETVGNTASQAAAFPRVREALLRRQRAFREAPGLIADGRDMGTIVFPDAPVKIFLDASSQERAHRRMLQLQERGFNVNFERLLAEIQERDNRDRNRSVAPLVPAADALVLDSTSMSIEQVIEQALAYAQRILALPLKK</sequence>
<dbReference type="EC" id="2.7.4.25" evidence="1"/>
<dbReference type="EMBL" id="CP000308">
    <property type="protein sequence ID" value="ABG12650.1"/>
    <property type="molecule type" value="Genomic_DNA"/>
</dbReference>
<dbReference type="RefSeq" id="WP_002211324.1">
    <property type="nucleotide sequence ID" value="NZ_CP009906.1"/>
</dbReference>
<dbReference type="SMR" id="Q1CA72"/>
<dbReference type="GeneID" id="57977187"/>
<dbReference type="KEGG" id="ypa:YPA_0682"/>
<dbReference type="Proteomes" id="UP000001971">
    <property type="component" value="Chromosome"/>
</dbReference>
<dbReference type="GO" id="GO:0005829">
    <property type="term" value="C:cytosol"/>
    <property type="evidence" value="ECO:0007669"/>
    <property type="project" value="TreeGrafter"/>
</dbReference>
<dbReference type="GO" id="GO:0005524">
    <property type="term" value="F:ATP binding"/>
    <property type="evidence" value="ECO:0007669"/>
    <property type="project" value="UniProtKB-UniRule"/>
</dbReference>
<dbReference type="GO" id="GO:0036430">
    <property type="term" value="F:CMP kinase activity"/>
    <property type="evidence" value="ECO:0007669"/>
    <property type="project" value="RHEA"/>
</dbReference>
<dbReference type="GO" id="GO:0036431">
    <property type="term" value="F:dCMP kinase activity"/>
    <property type="evidence" value="ECO:0007669"/>
    <property type="project" value="RHEA"/>
</dbReference>
<dbReference type="GO" id="GO:0015949">
    <property type="term" value="P:nucleobase-containing small molecule interconversion"/>
    <property type="evidence" value="ECO:0007669"/>
    <property type="project" value="TreeGrafter"/>
</dbReference>
<dbReference type="GO" id="GO:0006220">
    <property type="term" value="P:pyrimidine nucleotide metabolic process"/>
    <property type="evidence" value="ECO:0007669"/>
    <property type="project" value="UniProtKB-UniRule"/>
</dbReference>
<dbReference type="CDD" id="cd02020">
    <property type="entry name" value="CMPK"/>
    <property type="match status" value="1"/>
</dbReference>
<dbReference type="FunFam" id="3.40.50.300:FF:000262">
    <property type="entry name" value="Cytidylate kinase"/>
    <property type="match status" value="1"/>
</dbReference>
<dbReference type="Gene3D" id="3.40.50.300">
    <property type="entry name" value="P-loop containing nucleotide triphosphate hydrolases"/>
    <property type="match status" value="1"/>
</dbReference>
<dbReference type="HAMAP" id="MF_00238">
    <property type="entry name" value="Cytidyl_kinase_type1"/>
    <property type="match status" value="1"/>
</dbReference>
<dbReference type="InterPro" id="IPR003136">
    <property type="entry name" value="Cytidylate_kin"/>
</dbReference>
<dbReference type="InterPro" id="IPR011994">
    <property type="entry name" value="Cytidylate_kinase_dom"/>
</dbReference>
<dbReference type="InterPro" id="IPR027417">
    <property type="entry name" value="P-loop_NTPase"/>
</dbReference>
<dbReference type="NCBIfam" id="TIGR00017">
    <property type="entry name" value="cmk"/>
    <property type="match status" value="1"/>
</dbReference>
<dbReference type="PANTHER" id="PTHR21299:SF2">
    <property type="entry name" value="CYTIDYLATE KINASE"/>
    <property type="match status" value="1"/>
</dbReference>
<dbReference type="PANTHER" id="PTHR21299">
    <property type="entry name" value="CYTIDYLATE KINASE/PANTOATE-BETA-ALANINE LIGASE"/>
    <property type="match status" value="1"/>
</dbReference>
<dbReference type="Pfam" id="PF02224">
    <property type="entry name" value="Cytidylate_kin"/>
    <property type="match status" value="1"/>
</dbReference>
<dbReference type="SUPFAM" id="SSF52540">
    <property type="entry name" value="P-loop containing nucleoside triphosphate hydrolases"/>
    <property type="match status" value="1"/>
</dbReference>